<organism>
    <name type="scientific">Bacillus mycoides (strain KBAB4)</name>
    <name type="common">Bacillus weihenstephanensis</name>
    <dbReference type="NCBI Taxonomy" id="315730"/>
    <lineage>
        <taxon>Bacteria</taxon>
        <taxon>Bacillati</taxon>
        <taxon>Bacillota</taxon>
        <taxon>Bacilli</taxon>
        <taxon>Bacillales</taxon>
        <taxon>Bacillaceae</taxon>
        <taxon>Bacillus</taxon>
        <taxon>Bacillus cereus group</taxon>
    </lineage>
</organism>
<sequence>MSIQVFCDFDGTITNNDNIMSIMEKFAPPEAEEIKQKILSQELSIQEGVSQLFRLIPINLHDDIIQFLQETAEIRTGFHEFIQFINENNISFYVISGGMDFFVYPLLQEIIPKEQIYCNATDFSGEFVEVKWPHPCDEQCQHSCGLCKSSLIRKLSSKDDFHIVIGDSITDLQATKQADKVFARDFLITKCEENRIAYTPFETFHDVLAELKHLLEVKL</sequence>
<keyword id="KW-0028">Amino-acid biosynthesis</keyword>
<keyword id="KW-0378">Hydrolase</keyword>
<keyword id="KW-0486">Methionine biosynthesis</keyword>
<comment type="function">
    <text evidence="1">Dephosphorylates 2-hydroxy-3-keto-5-methylthiopentenyl-1-phosphate (HK-MTPenyl-1-P) yielding 1,2-dihydroxy-3-keto-5-methylthiopentene (DHK-MTPene).</text>
</comment>
<comment type="catalytic activity">
    <reaction evidence="1">
        <text>2-hydroxy-5-methylsulfanyl-3-oxopent-1-enyl phosphate + H2O = 1,2-dihydroxy-5-(methylsulfanyl)pent-1-en-3-one + phosphate</text>
        <dbReference type="Rhea" id="RHEA:14481"/>
        <dbReference type="ChEBI" id="CHEBI:15377"/>
        <dbReference type="ChEBI" id="CHEBI:43474"/>
        <dbReference type="ChEBI" id="CHEBI:49252"/>
        <dbReference type="ChEBI" id="CHEBI:59505"/>
        <dbReference type="EC" id="3.1.3.87"/>
    </reaction>
</comment>
<comment type="pathway">
    <text evidence="1">Amino-acid biosynthesis; L-methionine biosynthesis via salvage pathway; L-methionine from S-methyl-5-thio-alpha-D-ribose 1-phosphate: step 4/6.</text>
</comment>
<comment type="similarity">
    <text evidence="1">Belongs to the HAD-like hydrolase superfamily. MtnX family.</text>
</comment>
<evidence type="ECO:0000255" key="1">
    <source>
        <dbReference type="HAMAP-Rule" id="MF_01680"/>
    </source>
</evidence>
<gene>
    <name evidence="1" type="primary">mtnX</name>
    <name type="ordered locus">BcerKBAB4_3866</name>
</gene>
<protein>
    <recommendedName>
        <fullName evidence="1">2-hydroxy-3-keto-5-methylthiopentenyl-1-phosphate phosphatase</fullName>
        <shortName evidence="1">HK-MTPenyl-1-P phosphatase</shortName>
        <ecNumber evidence="1">3.1.3.87</ecNumber>
    </recommendedName>
</protein>
<feature type="chain" id="PRO_0000357483" description="2-hydroxy-3-keto-5-methylthiopentenyl-1-phosphate phosphatase">
    <location>
        <begin position="1"/>
        <end position="219"/>
    </location>
</feature>
<proteinExistence type="inferred from homology"/>
<name>MTNX_BACMK</name>
<reference key="1">
    <citation type="journal article" date="2008" name="Chem. Biol. Interact.">
        <title>Extending the Bacillus cereus group genomics to putative food-borne pathogens of different toxicity.</title>
        <authorList>
            <person name="Lapidus A."/>
            <person name="Goltsman E."/>
            <person name="Auger S."/>
            <person name="Galleron N."/>
            <person name="Segurens B."/>
            <person name="Dossat C."/>
            <person name="Land M.L."/>
            <person name="Broussolle V."/>
            <person name="Brillard J."/>
            <person name="Guinebretiere M.-H."/>
            <person name="Sanchis V."/>
            <person name="Nguen-the C."/>
            <person name="Lereclus D."/>
            <person name="Richardson P."/>
            <person name="Wincker P."/>
            <person name="Weissenbach J."/>
            <person name="Ehrlich S.D."/>
            <person name="Sorokin A."/>
        </authorList>
    </citation>
    <scope>NUCLEOTIDE SEQUENCE [LARGE SCALE GENOMIC DNA]</scope>
    <source>
        <strain>KBAB4</strain>
    </source>
</reference>
<accession>A9VFE0</accession>
<dbReference type="EC" id="3.1.3.87" evidence="1"/>
<dbReference type="EMBL" id="CP000903">
    <property type="protein sequence ID" value="ABY45034.1"/>
    <property type="molecule type" value="Genomic_DNA"/>
</dbReference>
<dbReference type="RefSeq" id="WP_002128925.1">
    <property type="nucleotide sequence ID" value="NC_010184.1"/>
</dbReference>
<dbReference type="SMR" id="A9VFE0"/>
<dbReference type="KEGG" id="bwe:BcerKBAB4_3866"/>
<dbReference type="eggNOG" id="COG4359">
    <property type="taxonomic scope" value="Bacteria"/>
</dbReference>
<dbReference type="HOGENOM" id="CLU_058495_2_1_9"/>
<dbReference type="UniPathway" id="UPA00904">
    <property type="reaction ID" value="UER00877"/>
</dbReference>
<dbReference type="Proteomes" id="UP000002154">
    <property type="component" value="Chromosome"/>
</dbReference>
<dbReference type="GO" id="GO:0043716">
    <property type="term" value="F:2-hydroxy-3-keto-5-methylthiopentenyl-1-phosphate phosphatase activity"/>
    <property type="evidence" value="ECO:0007669"/>
    <property type="project" value="UniProtKB-UniRule"/>
</dbReference>
<dbReference type="GO" id="GO:0019509">
    <property type="term" value="P:L-methionine salvage from methylthioadenosine"/>
    <property type="evidence" value="ECO:0007669"/>
    <property type="project" value="UniProtKB-UniRule"/>
</dbReference>
<dbReference type="CDD" id="cd07524">
    <property type="entry name" value="HAD_Pase"/>
    <property type="match status" value="1"/>
</dbReference>
<dbReference type="Gene3D" id="3.90.1470.20">
    <property type="match status" value="1"/>
</dbReference>
<dbReference type="Gene3D" id="3.40.50.1000">
    <property type="entry name" value="HAD superfamily/HAD-like"/>
    <property type="match status" value="1"/>
</dbReference>
<dbReference type="HAMAP" id="MF_01680">
    <property type="entry name" value="Salvage_MtnX"/>
    <property type="match status" value="1"/>
</dbReference>
<dbReference type="InterPro" id="IPR050849">
    <property type="entry name" value="HAD-like_hydrolase_phosphatase"/>
</dbReference>
<dbReference type="InterPro" id="IPR036412">
    <property type="entry name" value="HAD-like_sf"/>
</dbReference>
<dbReference type="InterPro" id="IPR017718">
    <property type="entry name" value="HAD-SF_hydro_IB_MtnX"/>
</dbReference>
<dbReference type="InterPro" id="IPR006384">
    <property type="entry name" value="HAD_hydro_PyrdxlP_Pase-like"/>
</dbReference>
<dbReference type="InterPro" id="IPR023214">
    <property type="entry name" value="HAD_sf"/>
</dbReference>
<dbReference type="NCBIfam" id="TIGR01489">
    <property type="entry name" value="DKMTPPase-SF"/>
    <property type="match status" value="1"/>
</dbReference>
<dbReference type="NCBIfam" id="TIGR01488">
    <property type="entry name" value="HAD-SF-IB"/>
    <property type="match status" value="1"/>
</dbReference>
<dbReference type="NCBIfam" id="NF007103">
    <property type="entry name" value="PRK09552.1"/>
    <property type="match status" value="1"/>
</dbReference>
<dbReference type="NCBIfam" id="TIGR03333">
    <property type="entry name" value="salvage_mtnX"/>
    <property type="match status" value="1"/>
</dbReference>
<dbReference type="PANTHER" id="PTHR28181:SF2">
    <property type="entry name" value="PHOSPHORIC MONOESTER HYDROLASE"/>
    <property type="match status" value="1"/>
</dbReference>
<dbReference type="PANTHER" id="PTHR28181">
    <property type="entry name" value="UPF0655 PROTEIN YCR015C"/>
    <property type="match status" value="1"/>
</dbReference>
<dbReference type="Pfam" id="PF12710">
    <property type="entry name" value="HAD"/>
    <property type="match status" value="1"/>
</dbReference>
<dbReference type="SUPFAM" id="SSF56784">
    <property type="entry name" value="HAD-like"/>
    <property type="match status" value="1"/>
</dbReference>